<name>PURA_BRUC2</name>
<protein>
    <recommendedName>
        <fullName evidence="1">Adenylosuccinate synthetase</fullName>
        <shortName evidence="1">AMPSase</shortName>
        <shortName evidence="1">AdSS</shortName>
        <ecNumber evidence="1">6.3.4.4</ecNumber>
    </recommendedName>
    <alternativeName>
        <fullName evidence="1">IMP--aspartate ligase</fullName>
    </alternativeName>
</protein>
<proteinExistence type="inferred from homology"/>
<sequence>MANVVVVGSQWGDEGKGKIVDWLSERADVIVRYQGGHNAGHTLVIDGVSYKLSLLPSGLVRGKLSVIGNGVVVDPHHFVAEVEKLRGQGIDVTPDVLRVAENAPLILSIHRELDAMREGSNSGLKIGTTKRGIGPAYEDKVGRRAIRVIDLTEPETLRPKVERLLAHHNSLRRGMGLEEIAVETILTELTSVADQILPYIDQVWRVLDERRKAGARILFEGAQGALLDNDHGTYPFVTSSNTVAGQAAAGSGLGPTAIGYVLGITKAYTTRVGEGPFPTELNDEIGEFLGTKGHEFGVVTGRKRRCGWFDAVIVRQTVRTSGINGIALTKLDVLDGLEEIKICVAYELDGKRIDYLPSSMGAQARVKPIYETLPGWSETTAGARSWNDLPAQAVKYVRHIEELIGAPVAMLSTSPEREDTILVTDPFHD</sequence>
<reference key="1">
    <citation type="submission" date="2007-10" db="EMBL/GenBank/DDBJ databases">
        <title>Brucella canis ATCC 23365 whole genome shotgun sequencing project.</title>
        <authorList>
            <person name="Setubal J.C."/>
            <person name="Bowns C."/>
            <person name="Boyle S."/>
            <person name="Crasta O.R."/>
            <person name="Czar M.J."/>
            <person name="Dharmanolla C."/>
            <person name="Gillespie J.J."/>
            <person name="Kenyon R.W."/>
            <person name="Lu J."/>
            <person name="Mane S."/>
            <person name="Mohapatra S."/>
            <person name="Nagrani S."/>
            <person name="Purkayastha A."/>
            <person name="Rajasimha H.K."/>
            <person name="Shallom J.M."/>
            <person name="Shallom S."/>
            <person name="Shukla M."/>
            <person name="Snyder E.E."/>
            <person name="Sobral B.W."/>
            <person name="Wattam A.R."/>
            <person name="Will R."/>
            <person name="Williams K."/>
            <person name="Yoo H."/>
            <person name="Bruce D."/>
            <person name="Detter C."/>
            <person name="Munk C."/>
            <person name="Brettin T.S."/>
        </authorList>
    </citation>
    <scope>NUCLEOTIDE SEQUENCE [LARGE SCALE GENOMIC DNA]</scope>
    <source>
        <strain>ATCC 23365 / NCTC 10854 / RM-666</strain>
    </source>
</reference>
<keyword id="KW-0963">Cytoplasm</keyword>
<keyword id="KW-0342">GTP-binding</keyword>
<keyword id="KW-0436">Ligase</keyword>
<keyword id="KW-0460">Magnesium</keyword>
<keyword id="KW-0479">Metal-binding</keyword>
<keyword id="KW-0547">Nucleotide-binding</keyword>
<keyword id="KW-0658">Purine biosynthesis</keyword>
<keyword id="KW-1185">Reference proteome</keyword>
<comment type="function">
    <text evidence="1">Plays an important role in the de novo pathway of purine nucleotide biosynthesis. Catalyzes the first committed step in the biosynthesis of AMP from IMP.</text>
</comment>
<comment type="catalytic activity">
    <reaction evidence="1">
        <text>IMP + L-aspartate + GTP = N(6)-(1,2-dicarboxyethyl)-AMP + GDP + phosphate + 2 H(+)</text>
        <dbReference type="Rhea" id="RHEA:15753"/>
        <dbReference type="ChEBI" id="CHEBI:15378"/>
        <dbReference type="ChEBI" id="CHEBI:29991"/>
        <dbReference type="ChEBI" id="CHEBI:37565"/>
        <dbReference type="ChEBI" id="CHEBI:43474"/>
        <dbReference type="ChEBI" id="CHEBI:57567"/>
        <dbReference type="ChEBI" id="CHEBI:58053"/>
        <dbReference type="ChEBI" id="CHEBI:58189"/>
        <dbReference type="EC" id="6.3.4.4"/>
    </reaction>
</comment>
<comment type="cofactor">
    <cofactor evidence="1">
        <name>Mg(2+)</name>
        <dbReference type="ChEBI" id="CHEBI:18420"/>
    </cofactor>
    <text evidence="1">Binds 1 Mg(2+) ion per subunit.</text>
</comment>
<comment type="pathway">
    <text evidence="1">Purine metabolism; AMP biosynthesis via de novo pathway; AMP from IMP: step 1/2.</text>
</comment>
<comment type="subunit">
    <text evidence="1">Homodimer.</text>
</comment>
<comment type="subcellular location">
    <subcellularLocation>
        <location evidence="1">Cytoplasm</location>
    </subcellularLocation>
</comment>
<comment type="similarity">
    <text evidence="1">Belongs to the adenylosuccinate synthetase family.</text>
</comment>
<organism>
    <name type="scientific">Brucella canis (strain ATCC 23365 / NCTC 10854 / RM-666)</name>
    <dbReference type="NCBI Taxonomy" id="483179"/>
    <lineage>
        <taxon>Bacteria</taxon>
        <taxon>Pseudomonadati</taxon>
        <taxon>Pseudomonadota</taxon>
        <taxon>Alphaproteobacteria</taxon>
        <taxon>Hyphomicrobiales</taxon>
        <taxon>Brucellaceae</taxon>
        <taxon>Brucella/Ochrobactrum group</taxon>
        <taxon>Brucella</taxon>
    </lineage>
</organism>
<accession>A9M7I3</accession>
<feature type="chain" id="PRO_1000073938" description="Adenylosuccinate synthetase">
    <location>
        <begin position="1"/>
        <end position="429"/>
    </location>
</feature>
<feature type="active site" description="Proton acceptor" evidence="1">
    <location>
        <position position="13"/>
    </location>
</feature>
<feature type="active site" description="Proton donor" evidence="1">
    <location>
        <position position="41"/>
    </location>
</feature>
<feature type="binding site" evidence="1">
    <location>
        <begin position="12"/>
        <end position="18"/>
    </location>
    <ligand>
        <name>GTP</name>
        <dbReference type="ChEBI" id="CHEBI:37565"/>
    </ligand>
</feature>
<feature type="binding site" description="in other chain" evidence="1">
    <location>
        <begin position="13"/>
        <end position="16"/>
    </location>
    <ligand>
        <name>IMP</name>
        <dbReference type="ChEBI" id="CHEBI:58053"/>
        <note>ligand shared between dimeric partners</note>
    </ligand>
</feature>
<feature type="binding site" evidence="1">
    <location>
        <position position="13"/>
    </location>
    <ligand>
        <name>Mg(2+)</name>
        <dbReference type="ChEBI" id="CHEBI:18420"/>
    </ligand>
</feature>
<feature type="binding site" description="in other chain" evidence="1">
    <location>
        <begin position="38"/>
        <end position="41"/>
    </location>
    <ligand>
        <name>IMP</name>
        <dbReference type="ChEBI" id="CHEBI:58053"/>
        <note>ligand shared between dimeric partners</note>
    </ligand>
</feature>
<feature type="binding site" evidence="1">
    <location>
        <begin position="40"/>
        <end position="42"/>
    </location>
    <ligand>
        <name>GTP</name>
        <dbReference type="ChEBI" id="CHEBI:37565"/>
    </ligand>
</feature>
<feature type="binding site" evidence="1">
    <location>
        <position position="40"/>
    </location>
    <ligand>
        <name>Mg(2+)</name>
        <dbReference type="ChEBI" id="CHEBI:18420"/>
    </ligand>
</feature>
<feature type="binding site" description="in other chain" evidence="1">
    <location>
        <position position="129"/>
    </location>
    <ligand>
        <name>IMP</name>
        <dbReference type="ChEBI" id="CHEBI:58053"/>
        <note>ligand shared between dimeric partners</note>
    </ligand>
</feature>
<feature type="binding site" evidence="1">
    <location>
        <position position="143"/>
    </location>
    <ligand>
        <name>IMP</name>
        <dbReference type="ChEBI" id="CHEBI:58053"/>
        <note>ligand shared between dimeric partners</note>
    </ligand>
</feature>
<feature type="binding site" description="in other chain" evidence="1">
    <location>
        <position position="223"/>
    </location>
    <ligand>
        <name>IMP</name>
        <dbReference type="ChEBI" id="CHEBI:58053"/>
        <note>ligand shared between dimeric partners</note>
    </ligand>
</feature>
<feature type="binding site" description="in other chain" evidence="1">
    <location>
        <position position="238"/>
    </location>
    <ligand>
        <name>IMP</name>
        <dbReference type="ChEBI" id="CHEBI:58053"/>
        <note>ligand shared between dimeric partners</note>
    </ligand>
</feature>
<feature type="binding site" evidence="1">
    <location>
        <begin position="298"/>
        <end position="304"/>
    </location>
    <ligand>
        <name>substrate</name>
    </ligand>
</feature>
<feature type="binding site" description="in other chain" evidence="1">
    <location>
        <position position="302"/>
    </location>
    <ligand>
        <name>IMP</name>
        <dbReference type="ChEBI" id="CHEBI:58053"/>
        <note>ligand shared between dimeric partners</note>
    </ligand>
</feature>
<feature type="binding site" evidence="1">
    <location>
        <position position="304"/>
    </location>
    <ligand>
        <name>GTP</name>
        <dbReference type="ChEBI" id="CHEBI:37565"/>
    </ligand>
</feature>
<feature type="binding site" evidence="1">
    <location>
        <begin position="330"/>
        <end position="332"/>
    </location>
    <ligand>
        <name>GTP</name>
        <dbReference type="ChEBI" id="CHEBI:37565"/>
    </ligand>
</feature>
<feature type="binding site" evidence="1">
    <location>
        <begin position="412"/>
        <end position="414"/>
    </location>
    <ligand>
        <name>GTP</name>
        <dbReference type="ChEBI" id="CHEBI:37565"/>
    </ligand>
</feature>
<gene>
    <name evidence="1" type="primary">purA</name>
    <name type="ordered locus">BCAN_A1721</name>
</gene>
<evidence type="ECO:0000255" key="1">
    <source>
        <dbReference type="HAMAP-Rule" id="MF_00011"/>
    </source>
</evidence>
<dbReference type="EC" id="6.3.4.4" evidence="1"/>
<dbReference type="EMBL" id="CP000872">
    <property type="protein sequence ID" value="ABX62730.1"/>
    <property type="molecule type" value="Genomic_DNA"/>
</dbReference>
<dbReference type="RefSeq" id="WP_002964773.1">
    <property type="nucleotide sequence ID" value="NC_010103.1"/>
</dbReference>
<dbReference type="SMR" id="A9M7I3"/>
<dbReference type="KEGG" id="bcs:BCAN_A1721"/>
<dbReference type="HOGENOM" id="CLU_029848_0_0_5"/>
<dbReference type="PhylomeDB" id="A9M7I3"/>
<dbReference type="UniPathway" id="UPA00075">
    <property type="reaction ID" value="UER00335"/>
</dbReference>
<dbReference type="Proteomes" id="UP000001385">
    <property type="component" value="Chromosome I"/>
</dbReference>
<dbReference type="GO" id="GO:0005737">
    <property type="term" value="C:cytoplasm"/>
    <property type="evidence" value="ECO:0007669"/>
    <property type="project" value="UniProtKB-SubCell"/>
</dbReference>
<dbReference type="GO" id="GO:0004019">
    <property type="term" value="F:adenylosuccinate synthase activity"/>
    <property type="evidence" value="ECO:0007669"/>
    <property type="project" value="UniProtKB-UniRule"/>
</dbReference>
<dbReference type="GO" id="GO:0005525">
    <property type="term" value="F:GTP binding"/>
    <property type="evidence" value="ECO:0007669"/>
    <property type="project" value="UniProtKB-UniRule"/>
</dbReference>
<dbReference type="GO" id="GO:0000287">
    <property type="term" value="F:magnesium ion binding"/>
    <property type="evidence" value="ECO:0007669"/>
    <property type="project" value="UniProtKB-UniRule"/>
</dbReference>
<dbReference type="GO" id="GO:0044208">
    <property type="term" value="P:'de novo' AMP biosynthetic process"/>
    <property type="evidence" value="ECO:0007669"/>
    <property type="project" value="UniProtKB-UniRule"/>
</dbReference>
<dbReference type="GO" id="GO:0046040">
    <property type="term" value="P:IMP metabolic process"/>
    <property type="evidence" value="ECO:0007669"/>
    <property type="project" value="TreeGrafter"/>
</dbReference>
<dbReference type="CDD" id="cd03108">
    <property type="entry name" value="AdSS"/>
    <property type="match status" value="1"/>
</dbReference>
<dbReference type="FunFam" id="1.10.300.10:FF:000001">
    <property type="entry name" value="Adenylosuccinate synthetase"/>
    <property type="match status" value="1"/>
</dbReference>
<dbReference type="FunFam" id="3.90.170.10:FF:000001">
    <property type="entry name" value="Adenylosuccinate synthetase"/>
    <property type="match status" value="1"/>
</dbReference>
<dbReference type="Gene3D" id="3.40.440.10">
    <property type="entry name" value="Adenylosuccinate Synthetase, subunit A, domain 1"/>
    <property type="match status" value="1"/>
</dbReference>
<dbReference type="Gene3D" id="1.10.300.10">
    <property type="entry name" value="Adenylosuccinate Synthetase, subunit A, domain 2"/>
    <property type="match status" value="1"/>
</dbReference>
<dbReference type="Gene3D" id="3.90.170.10">
    <property type="entry name" value="Adenylosuccinate Synthetase, subunit A, domain 3"/>
    <property type="match status" value="1"/>
</dbReference>
<dbReference type="HAMAP" id="MF_00011">
    <property type="entry name" value="Adenylosucc_synth"/>
    <property type="match status" value="1"/>
</dbReference>
<dbReference type="InterPro" id="IPR018220">
    <property type="entry name" value="Adenylosuccin_syn_GTP-bd"/>
</dbReference>
<dbReference type="InterPro" id="IPR033128">
    <property type="entry name" value="Adenylosuccin_syn_Lys_AS"/>
</dbReference>
<dbReference type="InterPro" id="IPR042109">
    <property type="entry name" value="Adenylosuccinate_synth_dom1"/>
</dbReference>
<dbReference type="InterPro" id="IPR042110">
    <property type="entry name" value="Adenylosuccinate_synth_dom2"/>
</dbReference>
<dbReference type="InterPro" id="IPR042111">
    <property type="entry name" value="Adenylosuccinate_synth_dom3"/>
</dbReference>
<dbReference type="InterPro" id="IPR001114">
    <property type="entry name" value="Adenylosuccinate_synthetase"/>
</dbReference>
<dbReference type="InterPro" id="IPR027417">
    <property type="entry name" value="P-loop_NTPase"/>
</dbReference>
<dbReference type="NCBIfam" id="NF002223">
    <property type="entry name" value="PRK01117.1"/>
    <property type="match status" value="1"/>
</dbReference>
<dbReference type="NCBIfam" id="TIGR00184">
    <property type="entry name" value="purA"/>
    <property type="match status" value="1"/>
</dbReference>
<dbReference type="PANTHER" id="PTHR11846">
    <property type="entry name" value="ADENYLOSUCCINATE SYNTHETASE"/>
    <property type="match status" value="1"/>
</dbReference>
<dbReference type="PANTHER" id="PTHR11846:SF0">
    <property type="entry name" value="ADENYLOSUCCINATE SYNTHETASE"/>
    <property type="match status" value="1"/>
</dbReference>
<dbReference type="Pfam" id="PF00709">
    <property type="entry name" value="Adenylsucc_synt"/>
    <property type="match status" value="1"/>
</dbReference>
<dbReference type="SMART" id="SM00788">
    <property type="entry name" value="Adenylsucc_synt"/>
    <property type="match status" value="1"/>
</dbReference>
<dbReference type="SUPFAM" id="SSF52540">
    <property type="entry name" value="P-loop containing nucleoside triphosphate hydrolases"/>
    <property type="match status" value="1"/>
</dbReference>
<dbReference type="PROSITE" id="PS01266">
    <property type="entry name" value="ADENYLOSUCCIN_SYN_1"/>
    <property type="match status" value="1"/>
</dbReference>
<dbReference type="PROSITE" id="PS00513">
    <property type="entry name" value="ADENYLOSUCCIN_SYN_2"/>
    <property type="match status" value="1"/>
</dbReference>